<keyword id="KW-0025">Alternative splicing</keyword>
<keyword id="KW-0090">Biological rhythms</keyword>
<keyword id="KW-0238">DNA-binding</keyword>
<keyword id="KW-0539">Nucleus</keyword>
<keyword id="KW-1185">Reference proteome</keyword>
<keyword id="KW-0804">Transcription</keyword>
<keyword id="KW-0805">Transcription regulation</keyword>
<reference key="1">
    <citation type="journal article" date="2003" name="Plant Cell">
        <title>The novel MYB protein EARLY-PHYTOCHROME-RESPONSIVE1 is a component of a slave circadian oscillator in Arabidopsis.</title>
        <authorList>
            <person name="Kuno N."/>
            <person name="Moeller S.G."/>
            <person name="Shinomura T."/>
            <person name="Xu X."/>
            <person name="Chua N.H."/>
            <person name="Furuya M."/>
        </authorList>
    </citation>
    <scope>NUCLEOTIDE SEQUENCE [MRNA] (ISOFORM 2)</scope>
    <scope>FUNCTION</scope>
    <scope>INDUCTION BY LIGHT</scope>
    <scope>SUBCELLULAR LOCATION</scope>
    <source>
        <strain>cv. Landsberg erecta</strain>
    </source>
</reference>
<reference key="2">
    <citation type="journal article" date="2000" name="Nature">
        <title>Sequence and analysis of chromosome 1 of the plant Arabidopsis thaliana.</title>
        <authorList>
            <person name="Theologis A."/>
            <person name="Ecker J.R."/>
            <person name="Palm C.J."/>
            <person name="Federspiel N.A."/>
            <person name="Kaul S."/>
            <person name="White O."/>
            <person name="Alonso J."/>
            <person name="Altafi H."/>
            <person name="Araujo R."/>
            <person name="Bowman C.L."/>
            <person name="Brooks S.Y."/>
            <person name="Buehler E."/>
            <person name="Chan A."/>
            <person name="Chao Q."/>
            <person name="Chen H."/>
            <person name="Cheuk R.F."/>
            <person name="Chin C.W."/>
            <person name="Chung M.K."/>
            <person name="Conn L."/>
            <person name="Conway A.B."/>
            <person name="Conway A.R."/>
            <person name="Creasy T.H."/>
            <person name="Dewar K."/>
            <person name="Dunn P."/>
            <person name="Etgu P."/>
            <person name="Feldblyum T.V."/>
            <person name="Feng J.-D."/>
            <person name="Fong B."/>
            <person name="Fujii C.Y."/>
            <person name="Gill J.E."/>
            <person name="Goldsmith A.D."/>
            <person name="Haas B."/>
            <person name="Hansen N.F."/>
            <person name="Hughes B."/>
            <person name="Huizar L."/>
            <person name="Hunter J.L."/>
            <person name="Jenkins J."/>
            <person name="Johnson-Hopson C."/>
            <person name="Khan S."/>
            <person name="Khaykin E."/>
            <person name="Kim C.J."/>
            <person name="Koo H.L."/>
            <person name="Kremenetskaia I."/>
            <person name="Kurtz D.B."/>
            <person name="Kwan A."/>
            <person name="Lam B."/>
            <person name="Langin-Hooper S."/>
            <person name="Lee A."/>
            <person name="Lee J.M."/>
            <person name="Lenz C.A."/>
            <person name="Li J.H."/>
            <person name="Li Y.-P."/>
            <person name="Lin X."/>
            <person name="Liu S.X."/>
            <person name="Liu Z.A."/>
            <person name="Luros J.S."/>
            <person name="Maiti R."/>
            <person name="Marziali A."/>
            <person name="Militscher J."/>
            <person name="Miranda M."/>
            <person name="Nguyen M."/>
            <person name="Nierman W.C."/>
            <person name="Osborne B.I."/>
            <person name="Pai G."/>
            <person name="Peterson J."/>
            <person name="Pham P.K."/>
            <person name="Rizzo M."/>
            <person name="Rooney T."/>
            <person name="Rowley D."/>
            <person name="Sakano H."/>
            <person name="Salzberg S.L."/>
            <person name="Schwartz J.R."/>
            <person name="Shinn P."/>
            <person name="Southwick A.M."/>
            <person name="Sun H."/>
            <person name="Tallon L.J."/>
            <person name="Tambunga G."/>
            <person name="Toriumi M.J."/>
            <person name="Town C.D."/>
            <person name="Utterback T."/>
            <person name="Van Aken S."/>
            <person name="Vaysberg M."/>
            <person name="Vysotskaia V.S."/>
            <person name="Walker M."/>
            <person name="Wu D."/>
            <person name="Yu G."/>
            <person name="Fraser C.M."/>
            <person name="Venter J.C."/>
            <person name="Davis R.W."/>
        </authorList>
    </citation>
    <scope>NUCLEOTIDE SEQUENCE [LARGE SCALE GENOMIC DNA]</scope>
    <source>
        <strain>cv. Columbia</strain>
    </source>
</reference>
<reference key="3">
    <citation type="journal article" date="2017" name="Plant J.">
        <title>Araport11: a complete reannotation of the Arabidopsis thaliana reference genome.</title>
        <authorList>
            <person name="Cheng C.Y."/>
            <person name="Krishnakumar V."/>
            <person name="Chan A.P."/>
            <person name="Thibaud-Nissen F."/>
            <person name="Schobel S."/>
            <person name="Town C.D."/>
        </authorList>
    </citation>
    <scope>GENOME REANNOTATION</scope>
    <source>
        <strain>cv. Columbia</strain>
    </source>
</reference>
<reference key="4">
    <citation type="journal article" date="2003" name="Science">
        <title>Empirical analysis of transcriptional activity in the Arabidopsis genome.</title>
        <authorList>
            <person name="Yamada K."/>
            <person name="Lim J."/>
            <person name="Dale J.M."/>
            <person name="Chen H."/>
            <person name="Shinn P."/>
            <person name="Palm C.J."/>
            <person name="Southwick A.M."/>
            <person name="Wu H.C."/>
            <person name="Kim C.J."/>
            <person name="Nguyen M."/>
            <person name="Pham P.K."/>
            <person name="Cheuk R.F."/>
            <person name="Karlin-Newmann G."/>
            <person name="Liu S.X."/>
            <person name="Lam B."/>
            <person name="Sakano H."/>
            <person name="Wu T."/>
            <person name="Yu G."/>
            <person name="Miranda M."/>
            <person name="Quach H.L."/>
            <person name="Tripp M."/>
            <person name="Chang C.H."/>
            <person name="Lee J.M."/>
            <person name="Toriumi M.J."/>
            <person name="Chan M.M."/>
            <person name="Tang C.C."/>
            <person name="Onodera C.S."/>
            <person name="Deng J.M."/>
            <person name="Akiyama K."/>
            <person name="Ansari Y."/>
            <person name="Arakawa T."/>
            <person name="Banh J."/>
            <person name="Banno F."/>
            <person name="Bowser L."/>
            <person name="Brooks S.Y."/>
            <person name="Carninci P."/>
            <person name="Chao Q."/>
            <person name="Choy N."/>
            <person name="Enju A."/>
            <person name="Goldsmith A.D."/>
            <person name="Gurjal M."/>
            <person name="Hansen N.F."/>
            <person name="Hayashizaki Y."/>
            <person name="Johnson-Hopson C."/>
            <person name="Hsuan V.W."/>
            <person name="Iida K."/>
            <person name="Karnes M."/>
            <person name="Khan S."/>
            <person name="Koesema E."/>
            <person name="Ishida J."/>
            <person name="Jiang P.X."/>
            <person name="Jones T."/>
            <person name="Kawai J."/>
            <person name="Kamiya A."/>
            <person name="Meyers C."/>
            <person name="Nakajima M."/>
            <person name="Narusaka M."/>
            <person name="Seki M."/>
            <person name="Sakurai T."/>
            <person name="Satou M."/>
            <person name="Tamse R."/>
            <person name="Vaysberg M."/>
            <person name="Wallender E.K."/>
            <person name="Wong C."/>
            <person name="Yamamura Y."/>
            <person name="Yuan S."/>
            <person name="Shinozaki K."/>
            <person name="Davis R.W."/>
            <person name="Theologis A."/>
            <person name="Ecker J.R."/>
        </authorList>
    </citation>
    <scope>NUCLEOTIDE SEQUENCE [LARGE SCALE MRNA] (ISOFORM 2)</scope>
    <source>
        <strain>cv. Columbia</strain>
    </source>
</reference>
<reference key="5">
    <citation type="submission" date="2004-02" db="EMBL/GenBank/DDBJ databases">
        <title>The MYB transcription factor family in Arabidopsis: a genome-wide cloning and expression pattern analysis.</title>
        <authorList>
            <person name="Qu L."/>
            <person name="Gu H."/>
        </authorList>
    </citation>
    <scope>NUCLEOTIDE SEQUENCE [MRNA] (ISOFORM 2)</scope>
</reference>
<reference key="6">
    <citation type="journal article" date="2009" name="Proc. Natl. Acad. Sci. U.S.A.">
        <title>REVEILLE1, a Myb-like transcription factor, integrates the circadian clock and auxin pathways.</title>
        <authorList>
            <person name="Rawat R."/>
            <person name="Schwartz J."/>
            <person name="Jones M.A."/>
            <person name="Sairanen I."/>
            <person name="Cheng Y."/>
            <person name="Andersson C.R."/>
            <person name="Zhao Y."/>
            <person name="Ljung K."/>
            <person name="Harmer S.L."/>
        </authorList>
    </citation>
    <scope>INDUCTION</scope>
    <scope>DISRUPTION PHENOTYPE</scope>
    <scope>GENE FAMILY</scope>
    <scope>NOMENCLATURE</scope>
</reference>
<organism>
    <name type="scientific">Arabidopsis thaliana</name>
    <name type="common">Mouse-ear cress</name>
    <dbReference type="NCBI Taxonomy" id="3702"/>
    <lineage>
        <taxon>Eukaryota</taxon>
        <taxon>Viridiplantae</taxon>
        <taxon>Streptophyta</taxon>
        <taxon>Embryophyta</taxon>
        <taxon>Tracheophyta</taxon>
        <taxon>Spermatophyta</taxon>
        <taxon>Magnoliopsida</taxon>
        <taxon>eudicotyledons</taxon>
        <taxon>Gunneridae</taxon>
        <taxon>Pentapetalae</taxon>
        <taxon>rosids</taxon>
        <taxon>malvids</taxon>
        <taxon>Brassicales</taxon>
        <taxon>Brassicaceae</taxon>
        <taxon>Camelineae</taxon>
        <taxon>Arabidopsis</taxon>
    </lineage>
</organism>
<accession>B3H5A8</accession>
<accession>Q8VZP5</accession>
<accession>Q9LPQ1</accession>
<feature type="chain" id="PRO_0000424840" description="Protein REVEILLE 7">
    <location>
        <begin position="1"/>
        <end position="372"/>
    </location>
</feature>
<feature type="domain" description="HTH myb-type" evidence="1">
    <location>
        <begin position="71"/>
        <end position="125"/>
    </location>
</feature>
<feature type="DNA-binding region" description="H-T-H motif" evidence="1">
    <location>
        <begin position="98"/>
        <end position="121"/>
    </location>
</feature>
<feature type="region of interest" description="Disordered" evidence="2">
    <location>
        <begin position="124"/>
        <end position="204"/>
    </location>
</feature>
<feature type="compositionally biased region" description="Basic residues" evidence="2">
    <location>
        <begin position="145"/>
        <end position="155"/>
    </location>
</feature>
<feature type="compositionally biased region" description="Pro residues" evidence="2">
    <location>
        <begin position="156"/>
        <end position="169"/>
    </location>
</feature>
<feature type="compositionally biased region" description="Polar residues" evidence="2">
    <location>
        <begin position="178"/>
        <end position="204"/>
    </location>
</feature>
<feature type="splice variant" id="VSP_053511" description="In isoform 2." evidence="5 6 7">
    <location>
        <begin position="1"/>
        <end position="26"/>
    </location>
</feature>
<evidence type="ECO:0000255" key="1">
    <source>
        <dbReference type="PROSITE-ProRule" id="PRU00625"/>
    </source>
</evidence>
<evidence type="ECO:0000256" key="2">
    <source>
        <dbReference type="SAM" id="MobiDB-lite"/>
    </source>
</evidence>
<evidence type="ECO:0000269" key="3">
    <source>
    </source>
</evidence>
<evidence type="ECO:0000269" key="4">
    <source>
    </source>
</evidence>
<evidence type="ECO:0000303" key="5">
    <source>
    </source>
</evidence>
<evidence type="ECO:0000303" key="6">
    <source>
    </source>
</evidence>
<evidence type="ECO:0000303" key="7">
    <source ref="5"/>
</evidence>
<evidence type="ECO:0000305" key="8"/>
<proteinExistence type="evidence at transcript level"/>
<dbReference type="EMBL" id="AB115696">
    <property type="protein sequence ID" value="BAC98462.1"/>
    <property type="molecule type" value="mRNA"/>
</dbReference>
<dbReference type="EMBL" id="AC013354">
    <property type="protein sequence ID" value="AAF25987.1"/>
    <property type="status" value="ALT_SEQ"/>
    <property type="molecule type" value="Genomic_DNA"/>
</dbReference>
<dbReference type="EMBL" id="CP002684">
    <property type="protein sequence ID" value="AEE29702.1"/>
    <property type="molecule type" value="Genomic_DNA"/>
</dbReference>
<dbReference type="EMBL" id="CP002684">
    <property type="protein sequence ID" value="AEE29703.1"/>
    <property type="molecule type" value="Genomic_DNA"/>
</dbReference>
<dbReference type="EMBL" id="AY063952">
    <property type="protein sequence ID" value="AAL36308.1"/>
    <property type="molecule type" value="mRNA"/>
</dbReference>
<dbReference type="EMBL" id="AY114070">
    <property type="protein sequence ID" value="AAM45118.1"/>
    <property type="molecule type" value="mRNA"/>
</dbReference>
<dbReference type="EMBL" id="AY550299">
    <property type="protein sequence ID" value="AAS58510.1"/>
    <property type="molecule type" value="mRNA"/>
</dbReference>
<dbReference type="RefSeq" id="NP_001117304.1">
    <molecule id="B3H5A8-1"/>
    <property type="nucleotide sequence ID" value="NM_001123832.2"/>
</dbReference>
<dbReference type="RefSeq" id="NP_173269.1">
    <molecule id="B3H5A8-2"/>
    <property type="nucleotide sequence ID" value="NM_101691.9"/>
</dbReference>
<dbReference type="SMR" id="B3H5A8"/>
<dbReference type="BioGRID" id="23652">
    <property type="interactions" value="9"/>
</dbReference>
<dbReference type="FunCoup" id="B3H5A8">
    <property type="interactions" value="30"/>
</dbReference>
<dbReference type="IntAct" id="B3H5A8">
    <property type="interactions" value="1"/>
</dbReference>
<dbReference type="STRING" id="3702.B3H5A8"/>
<dbReference type="PaxDb" id="3702-AT1G18330.2"/>
<dbReference type="EnsemblPlants" id="AT1G18330.1">
    <molecule id="B3H5A8-2"/>
    <property type="protein sequence ID" value="AT1G18330.1"/>
    <property type="gene ID" value="AT1G18330"/>
</dbReference>
<dbReference type="EnsemblPlants" id="AT1G18330.2">
    <molecule id="B3H5A8-1"/>
    <property type="protein sequence ID" value="AT1G18330.2"/>
    <property type="gene ID" value="AT1G18330"/>
</dbReference>
<dbReference type="GeneID" id="838413"/>
<dbReference type="Gramene" id="AT1G18330.1">
    <molecule id="B3H5A8-2"/>
    <property type="protein sequence ID" value="AT1G18330.1"/>
    <property type="gene ID" value="AT1G18330"/>
</dbReference>
<dbReference type="Gramene" id="AT1G18330.2">
    <molecule id="B3H5A8-1"/>
    <property type="protein sequence ID" value="AT1G18330.2"/>
    <property type="gene ID" value="AT1G18330"/>
</dbReference>
<dbReference type="KEGG" id="ath:AT1G18330"/>
<dbReference type="Araport" id="AT1G18330"/>
<dbReference type="TAIR" id="AT1G18330">
    <property type="gene designation" value="EPR1"/>
</dbReference>
<dbReference type="eggNOG" id="KOG0724">
    <property type="taxonomic scope" value="Eukaryota"/>
</dbReference>
<dbReference type="InParanoid" id="B3H5A8"/>
<dbReference type="OMA" id="NEGTTNH"/>
<dbReference type="PhylomeDB" id="B3H5A8"/>
<dbReference type="PRO" id="PR:B3H5A8"/>
<dbReference type="Proteomes" id="UP000006548">
    <property type="component" value="Chromosome 1"/>
</dbReference>
<dbReference type="ExpressionAtlas" id="B3H5A8">
    <property type="expression patterns" value="baseline and differential"/>
</dbReference>
<dbReference type="GO" id="GO:0005634">
    <property type="term" value="C:nucleus"/>
    <property type="evidence" value="ECO:0007669"/>
    <property type="project" value="UniProtKB-SubCell"/>
</dbReference>
<dbReference type="GO" id="GO:0003677">
    <property type="term" value="F:DNA binding"/>
    <property type="evidence" value="ECO:0007669"/>
    <property type="project" value="UniProtKB-KW"/>
</dbReference>
<dbReference type="GO" id="GO:0003700">
    <property type="term" value="F:DNA-binding transcription factor activity"/>
    <property type="evidence" value="ECO:0000250"/>
    <property type="project" value="TAIR"/>
</dbReference>
<dbReference type="GO" id="GO:0007623">
    <property type="term" value="P:circadian rhythm"/>
    <property type="evidence" value="ECO:0000270"/>
    <property type="project" value="TAIR"/>
</dbReference>
<dbReference type="GO" id="GO:0006355">
    <property type="term" value="P:regulation of DNA-templated transcription"/>
    <property type="evidence" value="ECO:0000304"/>
    <property type="project" value="TAIR"/>
</dbReference>
<dbReference type="CDD" id="cd00167">
    <property type="entry name" value="SANT"/>
    <property type="match status" value="1"/>
</dbReference>
<dbReference type="FunFam" id="1.10.10.60:FF:000023">
    <property type="entry name" value="protein REVEILLE 6 isoform X1"/>
    <property type="match status" value="1"/>
</dbReference>
<dbReference type="Gene3D" id="1.10.10.60">
    <property type="entry name" value="Homeodomain-like"/>
    <property type="match status" value="1"/>
</dbReference>
<dbReference type="InterPro" id="IPR009057">
    <property type="entry name" value="Homeodomain-like_sf"/>
</dbReference>
<dbReference type="InterPro" id="IPR017930">
    <property type="entry name" value="Myb_dom"/>
</dbReference>
<dbReference type="InterPro" id="IPR006447">
    <property type="entry name" value="Myb_dom_plants"/>
</dbReference>
<dbReference type="InterPro" id="IPR001005">
    <property type="entry name" value="SANT/Myb"/>
</dbReference>
<dbReference type="InterPro" id="IPR017884">
    <property type="entry name" value="SANT_dom"/>
</dbReference>
<dbReference type="NCBIfam" id="TIGR01557">
    <property type="entry name" value="myb_SHAQKYF"/>
    <property type="match status" value="1"/>
</dbReference>
<dbReference type="PANTHER" id="PTHR12802:SF164">
    <property type="entry name" value="PROTEIN REVEILLE 7-RELATED"/>
    <property type="match status" value="1"/>
</dbReference>
<dbReference type="PANTHER" id="PTHR12802">
    <property type="entry name" value="SWI/SNF COMPLEX-RELATED"/>
    <property type="match status" value="1"/>
</dbReference>
<dbReference type="Pfam" id="PF00249">
    <property type="entry name" value="Myb_DNA-binding"/>
    <property type="match status" value="1"/>
</dbReference>
<dbReference type="SMART" id="SM00717">
    <property type="entry name" value="SANT"/>
    <property type="match status" value="1"/>
</dbReference>
<dbReference type="SUPFAM" id="SSF46689">
    <property type="entry name" value="Homeodomain-like"/>
    <property type="match status" value="1"/>
</dbReference>
<dbReference type="PROSITE" id="PS51294">
    <property type="entry name" value="HTH_MYB"/>
    <property type="match status" value="1"/>
</dbReference>
<gene>
    <name type="primary">RVE7</name>
    <name type="synonym">EPR1</name>
    <name type="ordered locus">At1g18330</name>
    <name type="ORF">F15H18.16</name>
</gene>
<comment type="function">
    <text evidence="3">Transcription factor involved in phytochrome A-mediated cotyledon opening. Controlled by the central oscillator mediated by LHY and CCA1. Part of a regulatory circadian feedback loop. Regulates its own expression.</text>
</comment>
<comment type="subcellular location">
    <subcellularLocation>
        <location evidence="1 3">Nucleus</location>
    </subcellularLocation>
</comment>
<comment type="alternative products">
    <event type="alternative splicing"/>
    <isoform>
        <id>B3H5A8-1</id>
        <name>1</name>
        <sequence type="displayed"/>
    </isoform>
    <isoform>
        <id>B3H5A8-2</id>
        <name>2</name>
        <sequence type="described" ref="VSP_053511"/>
    </isoform>
</comment>
<comment type="induction">
    <text evidence="3 4">Circadian-regulation. Peak of transcript abundance near subjective dawn. Up-regulated transiently by red light and far red light.</text>
</comment>
<comment type="disruption phenotype">
    <text evidence="4">No effect on the regulation of core clock associated genes or on the hypocotyl length. Rve1, rve2 and rve7 triple mutant has no alteration in the period or phase of the clock.</text>
</comment>
<comment type="sequence caution" evidence="8">
    <conflict type="erroneous gene model prediction">
        <sequence resource="EMBL-CDS" id="AAF25987"/>
    </conflict>
</comment>
<sequence>MLCFVRFQAGFVRIIVAARKRFRYFLMAAEDRSEELSSNVENGSCNSNEGINPETSSHWIENVVKVRKPYTVTKQREKWSEEEHDRFLEAIKLYGRGWRQIQEHIGTKTAVQIRSHAQKFFSKMAQEADSRSEGSVKAIVIPPPRPKRKPAHPYPRKSPVPYTQSPPPNLSAMEKGTKSPTSVLSSFGSEDQVNRCSSPNSCTSDIQSIGATSIDKKNNYTTSKQPFKDDSDIGSTPISSITLFGKIVLVAEESHKPSSYNDDDLKQMTCQENHYSGMLVDTNLSLGVWETFCTGSNAFGSVTEASENLEKSAEPISSSWKRLSSLEKQGSCNPVNASGFRPYKRCLSEREVTSSLTLVASDEKKSQRARIC</sequence>
<protein>
    <recommendedName>
        <fullName>Protein REVEILLE 7</fullName>
    </recommendedName>
    <alternativeName>
        <fullName>Early-phytochrome-responsive 1</fullName>
    </alternativeName>
    <alternativeName>
        <fullName>MYB-related transcription factor EPR1</fullName>
    </alternativeName>
</protein>
<name>RVE7_ARATH</name>